<name>RL7_TREPS</name>
<evidence type="ECO:0000255" key="1">
    <source>
        <dbReference type="HAMAP-Rule" id="MF_00368"/>
    </source>
</evidence>
<evidence type="ECO:0000305" key="2"/>
<gene>
    <name evidence="1" type="primary">rplL</name>
    <name type="ordered locus">TPASS_0240</name>
</gene>
<proteinExistence type="inferred from homology"/>
<accession>B2S2I7</accession>
<comment type="function">
    <text evidence="1">Forms part of the ribosomal stalk which helps the ribosome interact with GTP-bound translation factors. Is thus essential for accurate translation.</text>
</comment>
<comment type="subunit">
    <text evidence="1">Homodimer. Part of the ribosomal stalk of the 50S ribosomal subunit. Forms a multimeric L10(L12)X complex, where L10 forms an elongated spine to which 2 to 4 L12 dimers bind in a sequential fashion. Binds GTP-bound translation factors.</text>
</comment>
<comment type="similarity">
    <text evidence="1">Belongs to the bacterial ribosomal protein bL12 family.</text>
</comment>
<feature type="chain" id="PRO_1000121502" description="Large ribosomal subunit protein bL12">
    <location>
        <begin position="1"/>
        <end position="129"/>
    </location>
</feature>
<dbReference type="EMBL" id="CP000805">
    <property type="protein sequence ID" value="ACD70666.1"/>
    <property type="molecule type" value="Genomic_DNA"/>
</dbReference>
<dbReference type="RefSeq" id="WP_010881688.1">
    <property type="nucleotide sequence ID" value="NC_021508.1"/>
</dbReference>
<dbReference type="SMR" id="B2S2I7"/>
<dbReference type="GeneID" id="93876032"/>
<dbReference type="KEGG" id="tpp:TPASS_0240"/>
<dbReference type="PATRIC" id="fig|455434.6.peg.244"/>
<dbReference type="Proteomes" id="UP000001202">
    <property type="component" value="Chromosome"/>
</dbReference>
<dbReference type="GO" id="GO:0022625">
    <property type="term" value="C:cytosolic large ribosomal subunit"/>
    <property type="evidence" value="ECO:0007669"/>
    <property type="project" value="TreeGrafter"/>
</dbReference>
<dbReference type="GO" id="GO:0003729">
    <property type="term" value="F:mRNA binding"/>
    <property type="evidence" value="ECO:0007669"/>
    <property type="project" value="TreeGrafter"/>
</dbReference>
<dbReference type="GO" id="GO:0003735">
    <property type="term" value="F:structural constituent of ribosome"/>
    <property type="evidence" value="ECO:0007669"/>
    <property type="project" value="InterPro"/>
</dbReference>
<dbReference type="GO" id="GO:0006412">
    <property type="term" value="P:translation"/>
    <property type="evidence" value="ECO:0007669"/>
    <property type="project" value="UniProtKB-UniRule"/>
</dbReference>
<dbReference type="CDD" id="cd00387">
    <property type="entry name" value="Ribosomal_L7_L12"/>
    <property type="match status" value="1"/>
</dbReference>
<dbReference type="FunFam" id="3.30.1390.10:FF:000001">
    <property type="entry name" value="50S ribosomal protein L7/L12"/>
    <property type="match status" value="1"/>
</dbReference>
<dbReference type="Gene3D" id="3.30.1390.10">
    <property type="match status" value="1"/>
</dbReference>
<dbReference type="Gene3D" id="1.20.5.710">
    <property type="entry name" value="Single helix bin"/>
    <property type="match status" value="1"/>
</dbReference>
<dbReference type="HAMAP" id="MF_00368">
    <property type="entry name" value="Ribosomal_bL12"/>
    <property type="match status" value="1"/>
</dbReference>
<dbReference type="InterPro" id="IPR000206">
    <property type="entry name" value="Ribosomal_bL12"/>
</dbReference>
<dbReference type="InterPro" id="IPR013823">
    <property type="entry name" value="Ribosomal_bL12_C"/>
</dbReference>
<dbReference type="InterPro" id="IPR014719">
    <property type="entry name" value="Ribosomal_bL12_C/ClpS-like"/>
</dbReference>
<dbReference type="InterPro" id="IPR008932">
    <property type="entry name" value="Ribosomal_bL12_oligo"/>
</dbReference>
<dbReference type="InterPro" id="IPR036235">
    <property type="entry name" value="Ribosomal_bL12_oligo_N_sf"/>
</dbReference>
<dbReference type="NCBIfam" id="TIGR00855">
    <property type="entry name" value="L12"/>
    <property type="match status" value="1"/>
</dbReference>
<dbReference type="PANTHER" id="PTHR45987">
    <property type="entry name" value="39S RIBOSOMAL PROTEIN L12"/>
    <property type="match status" value="1"/>
</dbReference>
<dbReference type="PANTHER" id="PTHR45987:SF4">
    <property type="entry name" value="LARGE RIBOSOMAL SUBUNIT PROTEIN BL12M"/>
    <property type="match status" value="1"/>
</dbReference>
<dbReference type="Pfam" id="PF00542">
    <property type="entry name" value="Ribosomal_L12"/>
    <property type="match status" value="1"/>
</dbReference>
<dbReference type="Pfam" id="PF16320">
    <property type="entry name" value="Ribosomal_L12_N"/>
    <property type="match status" value="1"/>
</dbReference>
<dbReference type="SUPFAM" id="SSF54736">
    <property type="entry name" value="ClpS-like"/>
    <property type="match status" value="1"/>
</dbReference>
<dbReference type="SUPFAM" id="SSF48300">
    <property type="entry name" value="Ribosomal protein L7/12, oligomerisation (N-terminal) domain"/>
    <property type="match status" value="1"/>
</dbReference>
<sequence>MAALSNEQIIEAIRGKTILELSELIKAVEEEFGVTAAVPVAPVAEGGGAGSVAAEEQTEFTVVLKGLAEPGKKIAVIKEVRNVISGLGLKEAKDLVEGAPKTLKENVSKEEAAKIKESMTAAGALIEIS</sequence>
<reference key="1">
    <citation type="journal article" date="2008" name="BMC Microbiol.">
        <title>Complete genome sequence of Treponema pallidum ssp. pallidum strain SS14 determined with oligonucleotide arrays.</title>
        <authorList>
            <person name="Matejkova P."/>
            <person name="Strouhal M."/>
            <person name="Smajs D."/>
            <person name="Norris S.J."/>
            <person name="Palzkill T."/>
            <person name="Petrosino J.F."/>
            <person name="Sodergren E."/>
            <person name="Norton J.E."/>
            <person name="Singh J."/>
            <person name="Richmond T.A."/>
            <person name="Molla M.N."/>
            <person name="Albert T.J."/>
            <person name="Weinstock G.M."/>
        </authorList>
    </citation>
    <scope>NUCLEOTIDE SEQUENCE [LARGE SCALE GENOMIC DNA]</scope>
    <source>
        <strain>SS14</strain>
    </source>
</reference>
<protein>
    <recommendedName>
        <fullName evidence="1">Large ribosomal subunit protein bL12</fullName>
    </recommendedName>
    <alternativeName>
        <fullName evidence="2">50S ribosomal protein L7/L12</fullName>
    </alternativeName>
</protein>
<organism>
    <name type="scientific">Treponema pallidum subsp. pallidum (strain SS14)</name>
    <dbReference type="NCBI Taxonomy" id="455434"/>
    <lineage>
        <taxon>Bacteria</taxon>
        <taxon>Pseudomonadati</taxon>
        <taxon>Spirochaetota</taxon>
        <taxon>Spirochaetia</taxon>
        <taxon>Spirochaetales</taxon>
        <taxon>Treponemataceae</taxon>
        <taxon>Treponema</taxon>
    </lineage>
</organism>
<keyword id="KW-0687">Ribonucleoprotein</keyword>
<keyword id="KW-0689">Ribosomal protein</keyword>